<accession>Q30PI7</accession>
<evidence type="ECO:0000255" key="1">
    <source>
        <dbReference type="HAMAP-Rule" id="MF_01351"/>
    </source>
</evidence>
<reference key="1">
    <citation type="journal article" date="2008" name="Appl. Environ. Microbiol.">
        <title>Genome of the epsilonproteobacterial chemolithoautotroph Sulfurimonas denitrificans.</title>
        <authorList>
            <person name="Sievert S.M."/>
            <person name="Scott K.M."/>
            <person name="Klotz M.G."/>
            <person name="Chain P.S.G."/>
            <person name="Hauser L.J."/>
            <person name="Hemp J."/>
            <person name="Huegler M."/>
            <person name="Land M."/>
            <person name="Lapidus A."/>
            <person name="Larimer F.W."/>
            <person name="Lucas S."/>
            <person name="Malfatti S.A."/>
            <person name="Meyer F."/>
            <person name="Paulsen I.T."/>
            <person name="Ren Q."/>
            <person name="Simon J."/>
            <person name="Bailey K."/>
            <person name="Diaz E."/>
            <person name="Fitzpatrick K.A."/>
            <person name="Glover B."/>
            <person name="Gwatney N."/>
            <person name="Korajkic A."/>
            <person name="Long A."/>
            <person name="Mobberley J.M."/>
            <person name="Pantry S.N."/>
            <person name="Pazder G."/>
            <person name="Peterson S."/>
            <person name="Quintanilla J.D."/>
            <person name="Sprinkle R."/>
            <person name="Stephens J."/>
            <person name="Thomas P."/>
            <person name="Vaughn R."/>
            <person name="Weber M.J."/>
            <person name="Wooten L.L."/>
        </authorList>
    </citation>
    <scope>NUCLEOTIDE SEQUENCE [LARGE SCALE GENOMIC DNA]</scope>
    <source>
        <strain>ATCC 33889 / DSM 1251</strain>
    </source>
</reference>
<dbReference type="EC" id="7.1.1.-" evidence="1"/>
<dbReference type="EMBL" id="CP000153">
    <property type="protein sequence ID" value="ABB45094.1"/>
    <property type="molecule type" value="Genomic_DNA"/>
</dbReference>
<dbReference type="RefSeq" id="WP_011373434.1">
    <property type="nucleotide sequence ID" value="NC_007575.1"/>
</dbReference>
<dbReference type="SMR" id="Q30PI7"/>
<dbReference type="STRING" id="326298.Suden_1820"/>
<dbReference type="KEGG" id="tdn:Suden_1820"/>
<dbReference type="eggNOG" id="COG1143">
    <property type="taxonomic scope" value="Bacteria"/>
</dbReference>
<dbReference type="HOGENOM" id="CLU_067218_4_1_7"/>
<dbReference type="OrthoDB" id="9808559at2"/>
<dbReference type="Proteomes" id="UP000002714">
    <property type="component" value="Chromosome"/>
</dbReference>
<dbReference type="GO" id="GO:0005886">
    <property type="term" value="C:plasma membrane"/>
    <property type="evidence" value="ECO:0007669"/>
    <property type="project" value="UniProtKB-SubCell"/>
</dbReference>
<dbReference type="GO" id="GO:0051539">
    <property type="term" value="F:4 iron, 4 sulfur cluster binding"/>
    <property type="evidence" value="ECO:0007669"/>
    <property type="project" value="UniProtKB-KW"/>
</dbReference>
<dbReference type="GO" id="GO:0005506">
    <property type="term" value="F:iron ion binding"/>
    <property type="evidence" value="ECO:0007669"/>
    <property type="project" value="UniProtKB-UniRule"/>
</dbReference>
<dbReference type="GO" id="GO:0050136">
    <property type="term" value="F:NADH:ubiquinone reductase (non-electrogenic) activity"/>
    <property type="evidence" value="ECO:0007669"/>
    <property type="project" value="UniProtKB-UniRule"/>
</dbReference>
<dbReference type="GO" id="GO:0048038">
    <property type="term" value="F:quinone binding"/>
    <property type="evidence" value="ECO:0007669"/>
    <property type="project" value="UniProtKB-KW"/>
</dbReference>
<dbReference type="GO" id="GO:0009060">
    <property type="term" value="P:aerobic respiration"/>
    <property type="evidence" value="ECO:0007669"/>
    <property type="project" value="TreeGrafter"/>
</dbReference>
<dbReference type="Gene3D" id="3.30.70.3270">
    <property type="match status" value="1"/>
</dbReference>
<dbReference type="HAMAP" id="MF_01351">
    <property type="entry name" value="NDH1_NuoI"/>
    <property type="match status" value="1"/>
</dbReference>
<dbReference type="InterPro" id="IPR017896">
    <property type="entry name" value="4Fe4S_Fe-S-bd"/>
</dbReference>
<dbReference type="InterPro" id="IPR017900">
    <property type="entry name" value="4Fe4S_Fe_S_CS"/>
</dbReference>
<dbReference type="InterPro" id="IPR010226">
    <property type="entry name" value="NADH_quinone_OxRdtase_chainI"/>
</dbReference>
<dbReference type="NCBIfam" id="TIGR01971">
    <property type="entry name" value="NuoI"/>
    <property type="match status" value="1"/>
</dbReference>
<dbReference type="NCBIfam" id="NF004542">
    <property type="entry name" value="PRK05888.2-3"/>
    <property type="match status" value="1"/>
</dbReference>
<dbReference type="PANTHER" id="PTHR10849:SF20">
    <property type="entry name" value="NADH DEHYDROGENASE [UBIQUINONE] IRON-SULFUR PROTEIN 8, MITOCHONDRIAL"/>
    <property type="match status" value="1"/>
</dbReference>
<dbReference type="PANTHER" id="PTHR10849">
    <property type="entry name" value="NADH DEHYDROGENASE UBIQUINONE IRON-SULFUR PROTEIN 8, MITOCHONDRIAL"/>
    <property type="match status" value="1"/>
</dbReference>
<dbReference type="Pfam" id="PF12838">
    <property type="entry name" value="Fer4_7"/>
    <property type="match status" value="1"/>
</dbReference>
<dbReference type="SUPFAM" id="SSF54862">
    <property type="entry name" value="4Fe-4S ferredoxins"/>
    <property type="match status" value="1"/>
</dbReference>
<dbReference type="PROSITE" id="PS00198">
    <property type="entry name" value="4FE4S_FER_1"/>
    <property type="match status" value="1"/>
</dbReference>
<dbReference type="PROSITE" id="PS51379">
    <property type="entry name" value="4FE4S_FER_2"/>
    <property type="match status" value="2"/>
</dbReference>
<sequence>MHNEHIEEHFNNRNVTELSSEYYMVDIAPYPTDGWGKFTRTLRRAIRGELFVGLWVVLREMIRFDIHTIQYPLEKMPIGPRYRAVHEMKRLWESDTERCIGCGLCEKICISNCIRIDTKLDENSRKEVTEYSINLGRCIFCGYCAEVCPELAITHGGEYENASDQREHFIMYQDMLTPLDKMKAGTQKEFEGFGAITPHEDERVKKTPLAY</sequence>
<proteinExistence type="inferred from homology"/>
<organism>
    <name type="scientific">Sulfurimonas denitrificans (strain ATCC 33889 / DSM 1251)</name>
    <name type="common">Thiomicrospira denitrificans (strain ATCC 33889 / DSM 1251)</name>
    <dbReference type="NCBI Taxonomy" id="326298"/>
    <lineage>
        <taxon>Bacteria</taxon>
        <taxon>Pseudomonadati</taxon>
        <taxon>Campylobacterota</taxon>
        <taxon>Epsilonproteobacteria</taxon>
        <taxon>Campylobacterales</taxon>
        <taxon>Sulfurimonadaceae</taxon>
        <taxon>Sulfurimonas</taxon>
    </lineage>
</organism>
<feature type="chain" id="PRO_0000245756" description="NADH-quinone oxidoreductase subunit I">
    <location>
        <begin position="1"/>
        <end position="211"/>
    </location>
</feature>
<feature type="domain" description="4Fe-4S ferredoxin-type 1" evidence="1">
    <location>
        <begin position="90"/>
        <end position="119"/>
    </location>
</feature>
<feature type="domain" description="4Fe-4S ferredoxin-type 2" evidence="1">
    <location>
        <begin position="129"/>
        <end position="158"/>
    </location>
</feature>
<feature type="binding site" evidence="1">
    <location>
        <position position="99"/>
    </location>
    <ligand>
        <name>[4Fe-4S] cluster</name>
        <dbReference type="ChEBI" id="CHEBI:49883"/>
        <label>1</label>
    </ligand>
</feature>
<feature type="binding site" evidence="1">
    <location>
        <position position="102"/>
    </location>
    <ligand>
        <name>[4Fe-4S] cluster</name>
        <dbReference type="ChEBI" id="CHEBI:49883"/>
        <label>1</label>
    </ligand>
</feature>
<feature type="binding site" evidence="1">
    <location>
        <position position="105"/>
    </location>
    <ligand>
        <name>[4Fe-4S] cluster</name>
        <dbReference type="ChEBI" id="CHEBI:49883"/>
        <label>1</label>
    </ligand>
</feature>
<feature type="binding site" evidence="1">
    <location>
        <position position="109"/>
    </location>
    <ligand>
        <name>[4Fe-4S] cluster</name>
        <dbReference type="ChEBI" id="CHEBI:49883"/>
        <label>2</label>
    </ligand>
</feature>
<feature type="binding site" evidence="1">
    <location>
        <position position="138"/>
    </location>
    <ligand>
        <name>[4Fe-4S] cluster</name>
        <dbReference type="ChEBI" id="CHEBI:49883"/>
        <label>2</label>
    </ligand>
</feature>
<feature type="binding site" evidence="1">
    <location>
        <position position="141"/>
    </location>
    <ligand>
        <name>[4Fe-4S] cluster</name>
        <dbReference type="ChEBI" id="CHEBI:49883"/>
        <label>2</label>
    </ligand>
</feature>
<feature type="binding site" evidence="1">
    <location>
        <position position="144"/>
    </location>
    <ligand>
        <name>[4Fe-4S] cluster</name>
        <dbReference type="ChEBI" id="CHEBI:49883"/>
        <label>2</label>
    </ligand>
</feature>
<feature type="binding site" evidence="1">
    <location>
        <position position="148"/>
    </location>
    <ligand>
        <name>[4Fe-4S] cluster</name>
        <dbReference type="ChEBI" id="CHEBI:49883"/>
        <label>1</label>
    </ligand>
</feature>
<name>NUOI_SULDN</name>
<protein>
    <recommendedName>
        <fullName evidence="1">NADH-quinone oxidoreductase subunit I</fullName>
        <ecNumber evidence="1">7.1.1.-</ecNumber>
    </recommendedName>
    <alternativeName>
        <fullName evidence="1">NADH dehydrogenase I subunit I</fullName>
    </alternativeName>
    <alternativeName>
        <fullName evidence="1">NDH-1 subunit I</fullName>
    </alternativeName>
</protein>
<comment type="function">
    <text evidence="1">NDH-1 shuttles electrons from NADH, via FMN and iron-sulfur (Fe-S) centers, to quinones in the respiratory chain. The immediate electron acceptor for the enzyme in this species is believed to be ubiquinone. Couples the redox reaction to proton translocation (for every two electrons transferred, four hydrogen ions are translocated across the cytoplasmic membrane), and thus conserves the redox energy in a proton gradient.</text>
</comment>
<comment type="catalytic activity">
    <reaction evidence="1">
        <text>a quinone + NADH + 5 H(+)(in) = a quinol + NAD(+) + 4 H(+)(out)</text>
        <dbReference type="Rhea" id="RHEA:57888"/>
        <dbReference type="ChEBI" id="CHEBI:15378"/>
        <dbReference type="ChEBI" id="CHEBI:24646"/>
        <dbReference type="ChEBI" id="CHEBI:57540"/>
        <dbReference type="ChEBI" id="CHEBI:57945"/>
        <dbReference type="ChEBI" id="CHEBI:132124"/>
    </reaction>
</comment>
<comment type="cofactor">
    <cofactor evidence="1">
        <name>[4Fe-4S] cluster</name>
        <dbReference type="ChEBI" id="CHEBI:49883"/>
    </cofactor>
    <text evidence="1">Binds 2 [4Fe-4S] clusters per subunit.</text>
</comment>
<comment type="subunit">
    <text evidence="1">NDH-1 is composed of 14 different subunits. Subunits NuoA, H, J, K, L, M, N constitute the membrane sector of the complex.</text>
</comment>
<comment type="subcellular location">
    <subcellularLocation>
        <location evidence="1">Cell inner membrane</location>
        <topology evidence="1">Peripheral membrane protein</topology>
    </subcellularLocation>
</comment>
<comment type="similarity">
    <text evidence="1">Belongs to the complex I 23 kDa subunit family.</text>
</comment>
<gene>
    <name evidence="1" type="primary">nuoI</name>
    <name type="ordered locus">Suden_1820</name>
</gene>
<keyword id="KW-0004">4Fe-4S</keyword>
<keyword id="KW-0997">Cell inner membrane</keyword>
<keyword id="KW-1003">Cell membrane</keyword>
<keyword id="KW-0408">Iron</keyword>
<keyword id="KW-0411">Iron-sulfur</keyword>
<keyword id="KW-0472">Membrane</keyword>
<keyword id="KW-0479">Metal-binding</keyword>
<keyword id="KW-0520">NAD</keyword>
<keyword id="KW-0874">Quinone</keyword>
<keyword id="KW-1185">Reference proteome</keyword>
<keyword id="KW-0677">Repeat</keyword>
<keyword id="KW-1278">Translocase</keyword>
<keyword id="KW-0830">Ubiquinone</keyword>